<proteinExistence type="inferred from homology"/>
<gene>
    <name type="ordered locus">MMP1067</name>
</gene>
<protein>
    <recommendedName>
        <fullName>Uncharacterized iron-sulfur protein MMP1067</fullName>
    </recommendedName>
</protein>
<accession>Q6LYC4</accession>
<comment type="similarity">
    <text evidence="4">Belongs to the succinate dehydrogenase/fumarate reductase iron-sulfur protein family.</text>
</comment>
<feature type="chain" id="PRO_0000158710" description="Uncharacterized iron-sulfur protein MMP1067">
    <location>
        <begin position="1"/>
        <end position="494"/>
    </location>
</feature>
<feature type="domain" description="2Fe-2S ferredoxin-type" evidence="2">
    <location>
        <begin position="4"/>
        <end position="82"/>
    </location>
</feature>
<feature type="domain" description="4Fe-4S ferredoxin-type 1" evidence="3">
    <location>
        <begin position="127"/>
        <end position="157"/>
    </location>
</feature>
<feature type="domain" description="4Fe-4S ferredoxin-type 2" evidence="3">
    <location>
        <begin position="178"/>
        <end position="208"/>
    </location>
</feature>
<feature type="binding site" evidence="1">
    <location>
        <position position="46"/>
    </location>
    <ligand>
        <name>[2Fe-2S] cluster</name>
        <dbReference type="ChEBI" id="CHEBI:190135"/>
    </ligand>
</feature>
<feature type="binding site" evidence="1">
    <location>
        <position position="51"/>
    </location>
    <ligand>
        <name>[2Fe-2S] cluster</name>
        <dbReference type="ChEBI" id="CHEBI:190135"/>
    </ligand>
</feature>
<feature type="binding site" evidence="1">
    <location>
        <position position="54"/>
    </location>
    <ligand>
        <name>[2Fe-2S] cluster</name>
        <dbReference type="ChEBI" id="CHEBI:190135"/>
    </ligand>
</feature>
<feature type="binding site" evidence="1">
    <location>
        <position position="66"/>
    </location>
    <ligand>
        <name>[2Fe-2S] cluster</name>
        <dbReference type="ChEBI" id="CHEBI:190135"/>
    </ligand>
</feature>
<feature type="binding site" evidence="1">
    <location>
        <position position="137"/>
    </location>
    <ligand>
        <name>[4Fe-4S] cluster</name>
        <dbReference type="ChEBI" id="CHEBI:49883"/>
        <label>1</label>
    </ligand>
</feature>
<feature type="binding site" evidence="1">
    <location>
        <position position="140"/>
    </location>
    <ligand>
        <name>[4Fe-4S] cluster</name>
        <dbReference type="ChEBI" id="CHEBI:49883"/>
        <label>1</label>
    </ligand>
</feature>
<feature type="binding site" evidence="1">
    <location>
        <position position="143"/>
    </location>
    <ligand>
        <name>[4Fe-4S] cluster</name>
        <dbReference type="ChEBI" id="CHEBI:49883"/>
        <label>1</label>
    </ligand>
</feature>
<feature type="binding site" evidence="1">
    <location>
        <position position="147"/>
    </location>
    <ligand>
        <name>[4Fe-4S] cluster</name>
        <dbReference type="ChEBI" id="CHEBI:49883"/>
        <label>2</label>
    </ligand>
</feature>
<feature type="binding site" evidence="1">
    <location>
        <position position="189"/>
    </location>
    <ligand>
        <name>[4Fe-4S] cluster</name>
        <dbReference type="ChEBI" id="CHEBI:49883"/>
        <label>2</label>
    </ligand>
</feature>
<feature type="binding site" evidence="1">
    <location>
        <position position="192"/>
    </location>
    <ligand>
        <name>[4Fe-4S] cluster</name>
        <dbReference type="ChEBI" id="CHEBI:49883"/>
        <label>2</label>
    </ligand>
</feature>
<feature type="binding site" evidence="1">
    <location>
        <position position="195"/>
    </location>
    <ligand>
        <name>[4Fe-4S] cluster</name>
        <dbReference type="ChEBI" id="CHEBI:49883"/>
        <label>2</label>
    </ligand>
</feature>
<feature type="binding site" evidence="1">
    <location>
        <position position="199"/>
    </location>
    <ligand>
        <name>[4Fe-4S] cluster</name>
        <dbReference type="ChEBI" id="CHEBI:49883"/>
        <label>1</label>
    </ligand>
</feature>
<sequence length="494" mass="56112">MKTFTITVKKTEGFKKFEVPVGLTILDALEYINKTYGENIQFRSSCKAGQCGSCAVMINKKSKLACKTKVEDNMIIEPLEGFDVISDLVVDREPYYKKIGTLRNYIQKKNEKISEKELDGLKLYPDDLKDVKKIRGCIDCLSCIAMCPARKYSNYPGPTLMRQLARFAFDPKDEIDREKEAFDENIYNCTTCGRCVEVCPKEIDIVHNAVEKLREKTFKKGYNLDSHLEVRKNVLSQNRSVPKEKTSFLEEVSDEYIVENEKMRVAFFTGCLVDFRLQEIGKSAIRVLNAHGVSVIIPKNQVCCGSPFIRTGQTDISESLKKQNLEIFNKLNVDSVVTLCAGCGSTLKNDYKEKKFKVMDITEVLVKVGLIDYKPLDITVTYHDPCHLRRGQKVYLEPRKILESIPKLKFIEMEIPDQCCGAGGGVRSGKPEVAEAIGKRKANMIYATDADYLITVCPFCEYHIRDSLTKYLKEHGLKKDIPVMNIISLLDKVI</sequence>
<organism>
    <name type="scientific">Methanococcus maripaludis (strain DSM 14266 / JCM 13030 / NBRC 101832 / S2 / LL)</name>
    <dbReference type="NCBI Taxonomy" id="267377"/>
    <lineage>
        <taxon>Archaea</taxon>
        <taxon>Methanobacteriati</taxon>
        <taxon>Methanobacteriota</taxon>
        <taxon>Methanomada group</taxon>
        <taxon>Methanococci</taxon>
        <taxon>Methanococcales</taxon>
        <taxon>Methanococcaceae</taxon>
        <taxon>Methanococcus</taxon>
    </lineage>
</organism>
<name>Y1067_METMP</name>
<evidence type="ECO:0000250" key="1"/>
<evidence type="ECO:0000255" key="2">
    <source>
        <dbReference type="PROSITE-ProRule" id="PRU00465"/>
    </source>
</evidence>
<evidence type="ECO:0000255" key="3">
    <source>
        <dbReference type="PROSITE-ProRule" id="PRU00711"/>
    </source>
</evidence>
<evidence type="ECO:0000305" key="4"/>
<dbReference type="EMBL" id="BX950229">
    <property type="protein sequence ID" value="CAF30623.1"/>
    <property type="molecule type" value="Genomic_DNA"/>
</dbReference>
<dbReference type="RefSeq" id="WP_011171011.1">
    <property type="nucleotide sequence ID" value="NC_005791.1"/>
</dbReference>
<dbReference type="SMR" id="Q6LYC4"/>
<dbReference type="STRING" id="267377.MMP1067"/>
<dbReference type="EnsemblBacteria" id="CAF30623">
    <property type="protein sequence ID" value="CAF30623"/>
    <property type="gene ID" value="MMP1067"/>
</dbReference>
<dbReference type="GeneID" id="2762543"/>
<dbReference type="KEGG" id="mmp:MMP1067"/>
<dbReference type="PATRIC" id="fig|267377.15.peg.1100"/>
<dbReference type="eggNOG" id="arCOG00333">
    <property type="taxonomic scope" value="Archaea"/>
</dbReference>
<dbReference type="eggNOG" id="arCOG00963">
    <property type="taxonomic scope" value="Archaea"/>
</dbReference>
<dbReference type="HOGENOM" id="CLU_023081_2_0_2"/>
<dbReference type="OrthoDB" id="42878at2157"/>
<dbReference type="Proteomes" id="UP000000590">
    <property type="component" value="Chromosome"/>
</dbReference>
<dbReference type="GO" id="GO:0051537">
    <property type="term" value="F:2 iron, 2 sulfur cluster binding"/>
    <property type="evidence" value="ECO:0007669"/>
    <property type="project" value="UniProtKB-KW"/>
</dbReference>
<dbReference type="GO" id="GO:0051539">
    <property type="term" value="F:4 iron, 4 sulfur cluster binding"/>
    <property type="evidence" value="ECO:0007669"/>
    <property type="project" value="UniProtKB-KW"/>
</dbReference>
<dbReference type="GO" id="GO:0009055">
    <property type="term" value="F:electron transfer activity"/>
    <property type="evidence" value="ECO:0007669"/>
    <property type="project" value="InterPro"/>
</dbReference>
<dbReference type="GO" id="GO:0046872">
    <property type="term" value="F:metal ion binding"/>
    <property type="evidence" value="ECO:0007669"/>
    <property type="project" value="UniProtKB-KW"/>
</dbReference>
<dbReference type="GO" id="GO:0016491">
    <property type="term" value="F:oxidoreductase activity"/>
    <property type="evidence" value="ECO:0007669"/>
    <property type="project" value="InterPro"/>
</dbReference>
<dbReference type="GO" id="GO:0006099">
    <property type="term" value="P:tricarboxylic acid cycle"/>
    <property type="evidence" value="ECO:0007669"/>
    <property type="project" value="InterPro"/>
</dbReference>
<dbReference type="CDD" id="cd00207">
    <property type="entry name" value="fer2"/>
    <property type="match status" value="1"/>
</dbReference>
<dbReference type="Gene3D" id="3.10.20.30">
    <property type="match status" value="1"/>
</dbReference>
<dbReference type="Gene3D" id="1.10.1060.10">
    <property type="entry name" value="Alpha-helical ferredoxin"/>
    <property type="match status" value="1"/>
</dbReference>
<dbReference type="InterPro" id="IPR036010">
    <property type="entry name" value="2Fe-2S_ferredoxin-like_sf"/>
</dbReference>
<dbReference type="InterPro" id="IPR001041">
    <property type="entry name" value="2Fe-2S_ferredoxin-type"/>
</dbReference>
<dbReference type="InterPro" id="IPR006058">
    <property type="entry name" value="2Fe2S_fd_BS"/>
</dbReference>
<dbReference type="InterPro" id="IPR017896">
    <property type="entry name" value="4Fe4S_Fe-S-bd"/>
</dbReference>
<dbReference type="InterPro" id="IPR017900">
    <property type="entry name" value="4Fe4S_Fe_S_CS"/>
</dbReference>
<dbReference type="InterPro" id="IPR012675">
    <property type="entry name" value="Beta-grasp_dom_sf"/>
</dbReference>
<dbReference type="InterPro" id="IPR004017">
    <property type="entry name" value="Cys_rich_dom"/>
</dbReference>
<dbReference type="InterPro" id="IPR009051">
    <property type="entry name" value="Helical_ferredxn"/>
</dbReference>
<dbReference type="InterPro" id="IPR004489">
    <property type="entry name" value="Succ_DH/fum_Rdtase_Fe-S"/>
</dbReference>
<dbReference type="InterPro" id="IPR025192">
    <property type="entry name" value="Succ_DH/fum_Rdtase_N"/>
</dbReference>
<dbReference type="NCBIfam" id="TIGR00384">
    <property type="entry name" value="dhsB"/>
    <property type="match status" value="1"/>
</dbReference>
<dbReference type="NCBIfam" id="NF004898">
    <property type="entry name" value="PRK06259.1"/>
    <property type="match status" value="1"/>
</dbReference>
<dbReference type="PANTHER" id="PTHR32479">
    <property type="entry name" value="GLYCOLATE OXIDASE IRON-SULFUR SUBUNIT"/>
    <property type="match status" value="1"/>
</dbReference>
<dbReference type="PANTHER" id="PTHR32479:SF17">
    <property type="entry name" value="GLYCOLATE OXIDASE IRON-SULFUR SUBUNIT"/>
    <property type="match status" value="1"/>
</dbReference>
<dbReference type="Pfam" id="PF02754">
    <property type="entry name" value="CCG"/>
    <property type="match status" value="2"/>
</dbReference>
<dbReference type="Pfam" id="PF13085">
    <property type="entry name" value="Fer2_3"/>
    <property type="match status" value="1"/>
</dbReference>
<dbReference type="Pfam" id="PF13183">
    <property type="entry name" value="Fer4_8"/>
    <property type="match status" value="1"/>
</dbReference>
<dbReference type="SUPFAM" id="SSF54292">
    <property type="entry name" value="2Fe-2S ferredoxin-like"/>
    <property type="match status" value="1"/>
</dbReference>
<dbReference type="SUPFAM" id="SSF46548">
    <property type="entry name" value="alpha-helical ferredoxin"/>
    <property type="match status" value="1"/>
</dbReference>
<dbReference type="PROSITE" id="PS00197">
    <property type="entry name" value="2FE2S_FER_1"/>
    <property type="match status" value="1"/>
</dbReference>
<dbReference type="PROSITE" id="PS51085">
    <property type="entry name" value="2FE2S_FER_2"/>
    <property type="match status" value="1"/>
</dbReference>
<dbReference type="PROSITE" id="PS00198">
    <property type="entry name" value="4FE4S_FER_1"/>
    <property type="match status" value="2"/>
</dbReference>
<dbReference type="PROSITE" id="PS51379">
    <property type="entry name" value="4FE4S_FER_2"/>
    <property type="match status" value="2"/>
</dbReference>
<keyword id="KW-0001">2Fe-2S</keyword>
<keyword id="KW-0004">4Fe-4S</keyword>
<keyword id="KW-0408">Iron</keyword>
<keyword id="KW-0411">Iron-sulfur</keyword>
<keyword id="KW-0479">Metal-binding</keyword>
<keyword id="KW-1185">Reference proteome</keyword>
<keyword id="KW-0677">Repeat</keyword>
<reference key="1">
    <citation type="journal article" date="2004" name="J. Bacteriol.">
        <title>Complete genome sequence of the genetically tractable hydrogenotrophic methanogen Methanococcus maripaludis.</title>
        <authorList>
            <person name="Hendrickson E.L."/>
            <person name="Kaul R."/>
            <person name="Zhou Y."/>
            <person name="Bovee D."/>
            <person name="Chapman P."/>
            <person name="Chung J."/>
            <person name="Conway de Macario E."/>
            <person name="Dodsworth J.A."/>
            <person name="Gillett W."/>
            <person name="Graham D.E."/>
            <person name="Hackett M."/>
            <person name="Haydock A.K."/>
            <person name="Kang A."/>
            <person name="Land M.L."/>
            <person name="Levy R."/>
            <person name="Lie T.J."/>
            <person name="Major T.A."/>
            <person name="Moore B.C."/>
            <person name="Porat I."/>
            <person name="Palmeiri A."/>
            <person name="Rouse G."/>
            <person name="Saenphimmachak C."/>
            <person name="Soell D."/>
            <person name="Van Dien S."/>
            <person name="Wang T."/>
            <person name="Whitman W.B."/>
            <person name="Xia Q."/>
            <person name="Zhang Y."/>
            <person name="Larimer F.W."/>
            <person name="Olson M.V."/>
            <person name="Leigh J.A."/>
        </authorList>
    </citation>
    <scope>NUCLEOTIDE SEQUENCE [LARGE SCALE GENOMIC DNA]</scope>
    <source>
        <strain>DSM 14266 / JCM 13030 / NBRC 101832 / S2 / LL</strain>
    </source>
</reference>